<name>RLMF_PSEE4</name>
<gene>
    <name evidence="1" type="primary">rlmF</name>
    <name type="ordered locus">PSEEN4447</name>
</gene>
<protein>
    <recommendedName>
        <fullName evidence="1">Ribosomal RNA large subunit methyltransferase F</fullName>
        <ecNumber evidence="1">2.1.1.181</ecNumber>
    </recommendedName>
    <alternativeName>
        <fullName evidence="1">23S rRNA mA1618 methyltransferase</fullName>
    </alternativeName>
    <alternativeName>
        <fullName evidence="1">rRNA adenine N-6-methyltransferase</fullName>
    </alternativeName>
</protein>
<accession>Q1I5F5</accession>
<feature type="chain" id="PRO_0000349928" description="Ribosomal RNA large subunit methyltransferase F">
    <location>
        <begin position="1"/>
        <end position="316"/>
    </location>
</feature>
<dbReference type="EC" id="2.1.1.181" evidence="1"/>
<dbReference type="EMBL" id="CT573326">
    <property type="protein sequence ID" value="CAK17130.1"/>
    <property type="molecule type" value="Genomic_DNA"/>
</dbReference>
<dbReference type="RefSeq" id="WP_011535501.1">
    <property type="nucleotide sequence ID" value="NC_008027.1"/>
</dbReference>
<dbReference type="SMR" id="Q1I5F5"/>
<dbReference type="STRING" id="384676.PSEEN4447"/>
<dbReference type="GeneID" id="32807444"/>
<dbReference type="KEGG" id="pen:PSEEN4447"/>
<dbReference type="eggNOG" id="COG3129">
    <property type="taxonomic scope" value="Bacteria"/>
</dbReference>
<dbReference type="HOGENOM" id="CLU_027534_3_0_6"/>
<dbReference type="OrthoDB" id="1115728at2"/>
<dbReference type="Proteomes" id="UP000000658">
    <property type="component" value="Chromosome"/>
</dbReference>
<dbReference type="GO" id="GO:0005737">
    <property type="term" value="C:cytoplasm"/>
    <property type="evidence" value="ECO:0007669"/>
    <property type="project" value="UniProtKB-SubCell"/>
</dbReference>
<dbReference type="GO" id="GO:0052907">
    <property type="term" value="F:23S rRNA (adenine(1618)-N(6))-methyltransferase activity"/>
    <property type="evidence" value="ECO:0007669"/>
    <property type="project" value="UniProtKB-EC"/>
</dbReference>
<dbReference type="GO" id="GO:0070475">
    <property type="term" value="P:rRNA base methylation"/>
    <property type="evidence" value="ECO:0007669"/>
    <property type="project" value="TreeGrafter"/>
</dbReference>
<dbReference type="CDD" id="cd02440">
    <property type="entry name" value="AdoMet_MTases"/>
    <property type="match status" value="1"/>
</dbReference>
<dbReference type="Gene3D" id="3.40.50.150">
    <property type="entry name" value="Vaccinia Virus protein VP39"/>
    <property type="match status" value="1"/>
</dbReference>
<dbReference type="HAMAP" id="MF_01848">
    <property type="entry name" value="23SrRNA_methyltr_F"/>
    <property type="match status" value="1"/>
</dbReference>
<dbReference type="InterPro" id="IPR010286">
    <property type="entry name" value="METTL16/RlmF"/>
</dbReference>
<dbReference type="InterPro" id="IPR016909">
    <property type="entry name" value="rRNA_lsu_MeTfrase_F"/>
</dbReference>
<dbReference type="InterPro" id="IPR029063">
    <property type="entry name" value="SAM-dependent_MTases_sf"/>
</dbReference>
<dbReference type="NCBIfam" id="NF008725">
    <property type="entry name" value="PRK11727.1"/>
    <property type="match status" value="1"/>
</dbReference>
<dbReference type="PANTHER" id="PTHR13393:SF0">
    <property type="entry name" value="RNA N6-ADENOSINE-METHYLTRANSFERASE METTL16"/>
    <property type="match status" value="1"/>
</dbReference>
<dbReference type="PANTHER" id="PTHR13393">
    <property type="entry name" value="SAM-DEPENDENT METHYLTRANSFERASE"/>
    <property type="match status" value="1"/>
</dbReference>
<dbReference type="Pfam" id="PF05971">
    <property type="entry name" value="Methyltransf_10"/>
    <property type="match status" value="1"/>
</dbReference>
<dbReference type="PIRSF" id="PIRSF029038">
    <property type="entry name" value="Mtase_YbiN_prd"/>
    <property type="match status" value="1"/>
</dbReference>
<dbReference type="SUPFAM" id="SSF53335">
    <property type="entry name" value="S-adenosyl-L-methionine-dependent methyltransferases"/>
    <property type="match status" value="1"/>
</dbReference>
<evidence type="ECO:0000255" key="1">
    <source>
        <dbReference type="HAMAP-Rule" id="MF_01848"/>
    </source>
</evidence>
<proteinExistence type="inferred from homology"/>
<reference key="1">
    <citation type="journal article" date="2006" name="Nat. Biotechnol.">
        <title>Complete genome sequence of the entomopathogenic and metabolically versatile soil bacterium Pseudomonas entomophila.</title>
        <authorList>
            <person name="Vodovar N."/>
            <person name="Vallenet D."/>
            <person name="Cruveiller S."/>
            <person name="Rouy Z."/>
            <person name="Barbe V."/>
            <person name="Acosta C."/>
            <person name="Cattolico L."/>
            <person name="Jubin C."/>
            <person name="Lajus A."/>
            <person name="Segurens B."/>
            <person name="Vacherie B."/>
            <person name="Wincker P."/>
            <person name="Weissenbach J."/>
            <person name="Lemaitre B."/>
            <person name="Medigue C."/>
            <person name="Boccard F."/>
        </authorList>
    </citation>
    <scope>NUCLEOTIDE SEQUENCE [LARGE SCALE GENOMIC DNA]</scope>
    <source>
        <strain>L48</strain>
    </source>
</reference>
<organism>
    <name type="scientific">Pseudomonas entomophila (strain L48)</name>
    <dbReference type="NCBI Taxonomy" id="384676"/>
    <lineage>
        <taxon>Bacteria</taxon>
        <taxon>Pseudomonadati</taxon>
        <taxon>Pseudomonadota</taxon>
        <taxon>Gammaproteobacteria</taxon>
        <taxon>Pseudomonadales</taxon>
        <taxon>Pseudomonadaceae</taxon>
        <taxon>Pseudomonas</taxon>
    </lineage>
</organism>
<sequence>MTDKPTLHPRNRHQGRYDFPALIKAHPDLARFTITNPYGKPSIDFANPEAVRVFNRALLKAQYGVQHWDIPADYLCPPIPGRADYIHVLADLLAEDNAGDVPRGAQVRALDIGVGANCIYPLLGHSDYRWRFLGSDIDTTALASAKAIVQANKLDKAIGLRQQTQPKHILAGLLQADERFDVTLCNPPFHASREEATRGSQRKWKNLGKQDPKRKLPVLNFGGQNNELWCEGGEIRFVSQLVGESVQYAEQVLWFTSLVSKASNLPGIEAALKKAGVKALRIVEMGQGQKQSRMVAWSFHDDAARQAWHARRKSQA</sequence>
<keyword id="KW-0963">Cytoplasm</keyword>
<keyword id="KW-0489">Methyltransferase</keyword>
<keyword id="KW-0698">rRNA processing</keyword>
<keyword id="KW-0949">S-adenosyl-L-methionine</keyword>
<keyword id="KW-0808">Transferase</keyword>
<comment type="function">
    <text evidence="1">Specifically methylates the adenine in position 1618 of 23S rRNA.</text>
</comment>
<comment type="catalytic activity">
    <reaction evidence="1">
        <text>adenosine(1618) in 23S rRNA + S-adenosyl-L-methionine = N(6)-methyladenosine(1618) in 23S rRNA + S-adenosyl-L-homocysteine + H(+)</text>
        <dbReference type="Rhea" id="RHEA:16497"/>
        <dbReference type="Rhea" id="RHEA-COMP:10229"/>
        <dbReference type="Rhea" id="RHEA-COMP:10231"/>
        <dbReference type="ChEBI" id="CHEBI:15378"/>
        <dbReference type="ChEBI" id="CHEBI:57856"/>
        <dbReference type="ChEBI" id="CHEBI:59789"/>
        <dbReference type="ChEBI" id="CHEBI:74411"/>
        <dbReference type="ChEBI" id="CHEBI:74449"/>
        <dbReference type="EC" id="2.1.1.181"/>
    </reaction>
</comment>
<comment type="subcellular location">
    <subcellularLocation>
        <location evidence="1">Cytoplasm</location>
    </subcellularLocation>
</comment>
<comment type="similarity">
    <text evidence="1">Belongs to the methyltransferase superfamily. METTL16/RlmF family.</text>
</comment>